<keyword id="KW-0106">Calcium</keyword>
<keyword id="KW-0221">Differentiation</keyword>
<keyword id="KW-0479">Metal-binding</keyword>
<keyword id="KW-1185">Reference proteome</keyword>
<keyword id="KW-0677">Repeat</keyword>
<protein>
    <recommendedName>
        <fullName evidence="6">Copine-9</fullName>
    </recommendedName>
    <alternativeName>
        <fullName evidence="7">Copine IX</fullName>
    </alternativeName>
</protein>
<dbReference type="EMBL" id="AK042692">
    <property type="protein sequence ID" value="BAC31336.1"/>
    <property type="molecule type" value="mRNA"/>
</dbReference>
<dbReference type="EMBL" id="AK137422">
    <property type="protein sequence ID" value="BAE23347.1"/>
    <property type="molecule type" value="mRNA"/>
</dbReference>
<dbReference type="EMBL" id="BC115728">
    <property type="protein sequence ID" value="AAI15729.1"/>
    <property type="molecule type" value="mRNA"/>
</dbReference>
<dbReference type="CCDS" id="CCDS20413.1"/>
<dbReference type="RefSeq" id="NP_733773.2">
    <property type="nucleotide sequence ID" value="NM_170673.3"/>
</dbReference>
<dbReference type="SMR" id="Q1RLL3"/>
<dbReference type="BioGRID" id="229214">
    <property type="interactions" value="2"/>
</dbReference>
<dbReference type="FunCoup" id="Q1RLL3">
    <property type="interactions" value="161"/>
</dbReference>
<dbReference type="STRING" id="10090.ENSMUSP00000044416"/>
<dbReference type="GlyGen" id="Q1RLL3">
    <property type="glycosylation" value="1 site"/>
</dbReference>
<dbReference type="iPTMnet" id="Q1RLL3"/>
<dbReference type="PhosphoSitePlus" id="Q1RLL3"/>
<dbReference type="jPOST" id="Q1RLL3"/>
<dbReference type="PaxDb" id="10090-ENSMUSP00000044416"/>
<dbReference type="PeptideAtlas" id="Q1RLL3"/>
<dbReference type="ProteomicsDB" id="283816"/>
<dbReference type="DNASU" id="211232"/>
<dbReference type="GeneID" id="211232"/>
<dbReference type="KEGG" id="mmu:211232"/>
<dbReference type="UCSC" id="uc033itw.1">
    <property type="organism name" value="mouse"/>
</dbReference>
<dbReference type="AGR" id="MGI:2443052"/>
<dbReference type="CTD" id="151835"/>
<dbReference type="MGI" id="MGI:2443052">
    <property type="gene designation" value="Cpne9"/>
</dbReference>
<dbReference type="eggNOG" id="KOG1327">
    <property type="taxonomic scope" value="Eukaryota"/>
</dbReference>
<dbReference type="InParanoid" id="Q1RLL3"/>
<dbReference type="OrthoDB" id="5855668at2759"/>
<dbReference type="PhylomeDB" id="Q1RLL3"/>
<dbReference type="TreeFam" id="TF316419"/>
<dbReference type="BioGRID-ORCS" id="211232">
    <property type="hits" value="4 hits in 80 CRISPR screens"/>
</dbReference>
<dbReference type="ChiTaRS" id="Cpne9">
    <property type="organism name" value="mouse"/>
</dbReference>
<dbReference type="PRO" id="PR:Q1RLL3"/>
<dbReference type="Proteomes" id="UP000000589">
    <property type="component" value="Unplaced"/>
</dbReference>
<dbReference type="RNAct" id="Q1RLL3">
    <property type="molecule type" value="protein"/>
</dbReference>
<dbReference type="GO" id="GO:0005544">
    <property type="term" value="F:calcium-dependent phospholipid binding"/>
    <property type="evidence" value="ECO:0007669"/>
    <property type="project" value="InterPro"/>
</dbReference>
<dbReference type="GO" id="GO:0046872">
    <property type="term" value="F:metal ion binding"/>
    <property type="evidence" value="ECO:0007669"/>
    <property type="project" value="UniProtKB-KW"/>
</dbReference>
<dbReference type="GO" id="GO:0030154">
    <property type="term" value="P:cell differentiation"/>
    <property type="evidence" value="ECO:0007669"/>
    <property type="project" value="UniProtKB-KW"/>
</dbReference>
<dbReference type="CDD" id="cd04048">
    <property type="entry name" value="C2A_Copine"/>
    <property type="match status" value="1"/>
</dbReference>
<dbReference type="CDD" id="cd04047">
    <property type="entry name" value="C2B_Copine"/>
    <property type="match status" value="1"/>
</dbReference>
<dbReference type="CDD" id="cd01459">
    <property type="entry name" value="vWA_copine_like"/>
    <property type="match status" value="1"/>
</dbReference>
<dbReference type="FunFam" id="2.60.40.150:FF:000013">
    <property type="entry name" value="copine-9 isoform X1"/>
    <property type="match status" value="1"/>
</dbReference>
<dbReference type="FunFam" id="2.60.40.150:FF:000127">
    <property type="entry name" value="copine-9 isoform X2"/>
    <property type="match status" value="1"/>
</dbReference>
<dbReference type="Gene3D" id="2.60.40.150">
    <property type="entry name" value="C2 domain"/>
    <property type="match status" value="2"/>
</dbReference>
<dbReference type="InterPro" id="IPR000008">
    <property type="entry name" value="C2_dom"/>
</dbReference>
<dbReference type="InterPro" id="IPR035892">
    <property type="entry name" value="C2_domain_sf"/>
</dbReference>
<dbReference type="InterPro" id="IPR037768">
    <property type="entry name" value="C2B_Copine"/>
</dbReference>
<dbReference type="InterPro" id="IPR045052">
    <property type="entry name" value="Copine"/>
</dbReference>
<dbReference type="InterPro" id="IPR010734">
    <property type="entry name" value="Copine_C"/>
</dbReference>
<dbReference type="InterPro" id="IPR002035">
    <property type="entry name" value="VWF_A"/>
</dbReference>
<dbReference type="InterPro" id="IPR036465">
    <property type="entry name" value="vWFA_dom_sf"/>
</dbReference>
<dbReference type="PANTHER" id="PTHR10857">
    <property type="entry name" value="COPINE"/>
    <property type="match status" value="1"/>
</dbReference>
<dbReference type="PANTHER" id="PTHR10857:SF112">
    <property type="entry name" value="COPINE-9"/>
    <property type="match status" value="1"/>
</dbReference>
<dbReference type="Pfam" id="PF00168">
    <property type="entry name" value="C2"/>
    <property type="match status" value="2"/>
</dbReference>
<dbReference type="Pfam" id="PF07002">
    <property type="entry name" value="Copine"/>
    <property type="match status" value="1"/>
</dbReference>
<dbReference type="SMART" id="SM00239">
    <property type="entry name" value="C2"/>
    <property type="match status" value="2"/>
</dbReference>
<dbReference type="SMART" id="SM00327">
    <property type="entry name" value="VWA"/>
    <property type="match status" value="1"/>
</dbReference>
<dbReference type="SUPFAM" id="SSF49562">
    <property type="entry name" value="C2 domain (Calcium/lipid-binding domain, CaLB)"/>
    <property type="match status" value="2"/>
</dbReference>
<dbReference type="SUPFAM" id="SSF53300">
    <property type="entry name" value="vWA-like"/>
    <property type="match status" value="1"/>
</dbReference>
<dbReference type="PROSITE" id="PS50004">
    <property type="entry name" value="C2"/>
    <property type="match status" value="2"/>
</dbReference>
<dbReference type="PROSITE" id="PS50234">
    <property type="entry name" value="VWFA"/>
    <property type="match status" value="1"/>
</dbReference>
<name>CPNE9_MOUSE</name>
<reference key="1">
    <citation type="journal article" date="2005" name="Science">
        <title>The transcriptional landscape of the mammalian genome.</title>
        <authorList>
            <person name="Carninci P."/>
            <person name="Kasukawa T."/>
            <person name="Katayama S."/>
            <person name="Gough J."/>
            <person name="Frith M.C."/>
            <person name="Maeda N."/>
            <person name="Oyama R."/>
            <person name="Ravasi T."/>
            <person name="Lenhard B."/>
            <person name="Wells C."/>
            <person name="Kodzius R."/>
            <person name="Shimokawa K."/>
            <person name="Bajic V.B."/>
            <person name="Brenner S.E."/>
            <person name="Batalov S."/>
            <person name="Forrest A.R."/>
            <person name="Zavolan M."/>
            <person name="Davis M.J."/>
            <person name="Wilming L.G."/>
            <person name="Aidinis V."/>
            <person name="Allen J.E."/>
            <person name="Ambesi-Impiombato A."/>
            <person name="Apweiler R."/>
            <person name="Aturaliya R.N."/>
            <person name="Bailey T.L."/>
            <person name="Bansal M."/>
            <person name="Baxter L."/>
            <person name="Beisel K.W."/>
            <person name="Bersano T."/>
            <person name="Bono H."/>
            <person name="Chalk A.M."/>
            <person name="Chiu K.P."/>
            <person name="Choudhary V."/>
            <person name="Christoffels A."/>
            <person name="Clutterbuck D.R."/>
            <person name="Crowe M.L."/>
            <person name="Dalla E."/>
            <person name="Dalrymple B.P."/>
            <person name="de Bono B."/>
            <person name="Della Gatta G."/>
            <person name="di Bernardo D."/>
            <person name="Down T."/>
            <person name="Engstrom P."/>
            <person name="Fagiolini M."/>
            <person name="Faulkner G."/>
            <person name="Fletcher C.F."/>
            <person name="Fukushima T."/>
            <person name="Furuno M."/>
            <person name="Futaki S."/>
            <person name="Gariboldi M."/>
            <person name="Georgii-Hemming P."/>
            <person name="Gingeras T.R."/>
            <person name="Gojobori T."/>
            <person name="Green R.E."/>
            <person name="Gustincich S."/>
            <person name="Harbers M."/>
            <person name="Hayashi Y."/>
            <person name="Hensch T.K."/>
            <person name="Hirokawa N."/>
            <person name="Hill D."/>
            <person name="Huminiecki L."/>
            <person name="Iacono M."/>
            <person name="Ikeo K."/>
            <person name="Iwama A."/>
            <person name="Ishikawa T."/>
            <person name="Jakt M."/>
            <person name="Kanapin A."/>
            <person name="Katoh M."/>
            <person name="Kawasawa Y."/>
            <person name="Kelso J."/>
            <person name="Kitamura H."/>
            <person name="Kitano H."/>
            <person name="Kollias G."/>
            <person name="Krishnan S.P."/>
            <person name="Kruger A."/>
            <person name="Kummerfeld S.K."/>
            <person name="Kurochkin I.V."/>
            <person name="Lareau L.F."/>
            <person name="Lazarevic D."/>
            <person name="Lipovich L."/>
            <person name="Liu J."/>
            <person name="Liuni S."/>
            <person name="McWilliam S."/>
            <person name="Madan Babu M."/>
            <person name="Madera M."/>
            <person name="Marchionni L."/>
            <person name="Matsuda H."/>
            <person name="Matsuzawa S."/>
            <person name="Miki H."/>
            <person name="Mignone F."/>
            <person name="Miyake S."/>
            <person name="Morris K."/>
            <person name="Mottagui-Tabar S."/>
            <person name="Mulder N."/>
            <person name="Nakano N."/>
            <person name="Nakauchi H."/>
            <person name="Ng P."/>
            <person name="Nilsson R."/>
            <person name="Nishiguchi S."/>
            <person name="Nishikawa S."/>
            <person name="Nori F."/>
            <person name="Ohara O."/>
            <person name="Okazaki Y."/>
            <person name="Orlando V."/>
            <person name="Pang K.C."/>
            <person name="Pavan W.J."/>
            <person name="Pavesi G."/>
            <person name="Pesole G."/>
            <person name="Petrovsky N."/>
            <person name="Piazza S."/>
            <person name="Reed J."/>
            <person name="Reid J.F."/>
            <person name="Ring B.Z."/>
            <person name="Ringwald M."/>
            <person name="Rost B."/>
            <person name="Ruan Y."/>
            <person name="Salzberg S.L."/>
            <person name="Sandelin A."/>
            <person name="Schneider C."/>
            <person name="Schoenbach C."/>
            <person name="Sekiguchi K."/>
            <person name="Semple C.A."/>
            <person name="Seno S."/>
            <person name="Sessa L."/>
            <person name="Sheng Y."/>
            <person name="Shibata Y."/>
            <person name="Shimada H."/>
            <person name="Shimada K."/>
            <person name="Silva D."/>
            <person name="Sinclair B."/>
            <person name="Sperling S."/>
            <person name="Stupka E."/>
            <person name="Sugiura K."/>
            <person name="Sultana R."/>
            <person name="Takenaka Y."/>
            <person name="Taki K."/>
            <person name="Tammoja K."/>
            <person name="Tan S.L."/>
            <person name="Tang S."/>
            <person name="Taylor M.S."/>
            <person name="Tegner J."/>
            <person name="Teichmann S.A."/>
            <person name="Ueda H.R."/>
            <person name="van Nimwegen E."/>
            <person name="Verardo R."/>
            <person name="Wei C.L."/>
            <person name="Yagi K."/>
            <person name="Yamanishi H."/>
            <person name="Zabarovsky E."/>
            <person name="Zhu S."/>
            <person name="Zimmer A."/>
            <person name="Hide W."/>
            <person name="Bult C."/>
            <person name="Grimmond S.M."/>
            <person name="Teasdale R.D."/>
            <person name="Liu E.T."/>
            <person name="Brusic V."/>
            <person name="Quackenbush J."/>
            <person name="Wahlestedt C."/>
            <person name="Mattick J.S."/>
            <person name="Hume D.A."/>
            <person name="Kai C."/>
            <person name="Sasaki D."/>
            <person name="Tomaru Y."/>
            <person name="Fukuda S."/>
            <person name="Kanamori-Katayama M."/>
            <person name="Suzuki M."/>
            <person name="Aoki J."/>
            <person name="Arakawa T."/>
            <person name="Iida J."/>
            <person name="Imamura K."/>
            <person name="Itoh M."/>
            <person name="Kato T."/>
            <person name="Kawaji H."/>
            <person name="Kawagashira N."/>
            <person name="Kawashima T."/>
            <person name="Kojima M."/>
            <person name="Kondo S."/>
            <person name="Konno H."/>
            <person name="Nakano K."/>
            <person name="Ninomiya N."/>
            <person name="Nishio T."/>
            <person name="Okada M."/>
            <person name="Plessy C."/>
            <person name="Shibata K."/>
            <person name="Shiraki T."/>
            <person name="Suzuki S."/>
            <person name="Tagami M."/>
            <person name="Waki K."/>
            <person name="Watahiki A."/>
            <person name="Okamura-Oho Y."/>
            <person name="Suzuki H."/>
            <person name="Kawai J."/>
            <person name="Hayashizaki Y."/>
        </authorList>
    </citation>
    <scope>NUCLEOTIDE SEQUENCE [LARGE SCALE MRNA]</scope>
    <source>
        <strain>C57BL/6J</strain>
        <tissue>Cerebellum</tissue>
    </source>
</reference>
<reference key="2">
    <citation type="journal article" date="2004" name="Genome Res.">
        <title>The status, quality, and expansion of the NIH full-length cDNA project: the Mammalian Gene Collection (MGC).</title>
        <authorList>
            <consortium name="The MGC Project Team"/>
        </authorList>
    </citation>
    <scope>NUCLEOTIDE SEQUENCE [LARGE SCALE MRNA]</scope>
</reference>
<reference key="3">
    <citation type="journal article" date="2010" name="Cell">
        <title>A tissue-specific atlas of mouse protein phosphorylation and expression.</title>
        <authorList>
            <person name="Huttlin E.L."/>
            <person name="Jedrychowski M.P."/>
            <person name="Elias J.E."/>
            <person name="Goswami T."/>
            <person name="Rad R."/>
            <person name="Beausoleil S.A."/>
            <person name="Villen J."/>
            <person name="Haas W."/>
            <person name="Sowa M.E."/>
            <person name="Gygi S.P."/>
        </authorList>
    </citation>
    <scope>IDENTIFICATION BY MASS SPECTROMETRY [LARGE SCALE ANALYSIS]</scope>
    <source>
        <tissue>Brain</tissue>
    </source>
</reference>
<feature type="chain" id="PRO_0000277584" description="Copine-9">
    <location>
        <begin position="1"/>
        <end position="553"/>
    </location>
</feature>
<feature type="domain" description="C2 1" evidence="3">
    <location>
        <begin position="1"/>
        <end position="125"/>
    </location>
</feature>
<feature type="domain" description="C2 2" evidence="3">
    <location>
        <begin position="132"/>
        <end position="255"/>
    </location>
</feature>
<feature type="domain" description="VWFA" evidence="4">
    <location>
        <begin position="299"/>
        <end position="500"/>
    </location>
</feature>
<feature type="region of interest" description="Disordered" evidence="5">
    <location>
        <begin position="531"/>
        <end position="553"/>
    </location>
</feature>
<feature type="compositionally biased region" description="Pro residues" evidence="5">
    <location>
        <begin position="536"/>
        <end position="553"/>
    </location>
</feature>
<feature type="binding site" evidence="3">
    <location>
        <position position="163"/>
    </location>
    <ligand>
        <name>Ca(2+)</name>
        <dbReference type="ChEBI" id="CHEBI:29108"/>
        <label>1</label>
    </ligand>
</feature>
<feature type="binding site" evidence="3">
    <location>
        <position position="163"/>
    </location>
    <ligand>
        <name>Ca(2+)</name>
        <dbReference type="ChEBI" id="CHEBI:29108"/>
        <label>2</label>
    </ligand>
</feature>
<feature type="binding site" evidence="3">
    <location>
        <position position="169"/>
    </location>
    <ligand>
        <name>Ca(2+)</name>
        <dbReference type="ChEBI" id="CHEBI:29108"/>
        <label>1</label>
    </ligand>
</feature>
<feature type="binding site" evidence="3">
    <location>
        <position position="225"/>
    </location>
    <ligand>
        <name>Ca(2+)</name>
        <dbReference type="ChEBI" id="CHEBI:29108"/>
        <label>1</label>
    </ligand>
</feature>
<feature type="binding site" evidence="3">
    <location>
        <position position="225"/>
    </location>
    <ligand>
        <name>Ca(2+)</name>
        <dbReference type="ChEBI" id="CHEBI:29108"/>
        <label>2</label>
    </ligand>
</feature>
<feature type="binding site" evidence="3">
    <location>
        <position position="227"/>
    </location>
    <ligand>
        <name>Ca(2+)</name>
        <dbReference type="ChEBI" id="CHEBI:29108"/>
        <label>1</label>
    </ligand>
</feature>
<feature type="binding site" evidence="3">
    <location>
        <position position="227"/>
    </location>
    <ligand>
        <name>Ca(2+)</name>
        <dbReference type="ChEBI" id="CHEBI:29108"/>
        <label>2</label>
    </ligand>
</feature>
<feature type="binding site" evidence="3">
    <location>
        <position position="233"/>
    </location>
    <ligand>
        <name>Ca(2+)</name>
        <dbReference type="ChEBI" id="CHEBI:29108"/>
        <label>2</label>
    </ligand>
</feature>
<feature type="sequence conflict" description="In Ref. 1; BAE23347/BAC31336." evidence="6" ref="1">
    <original>V</original>
    <variation>A</variation>
    <location>
        <position position="542"/>
    </location>
</feature>
<sequence>MSLSGASERSVPATKIEITVSCRNLLDLDTFSKSDPMVVLHTQSRASQEWREFGRTEVIDNTLNPDFVRKFVLDYFFEEKQNLRFDVYNVDSKANISKPKDFLGQAFLALGEVIGGQGSRVERPLTGVPGKKCGTILLTAEELSNCRDIATMQLCANKLDKKDFFGKSDPFLVFYRSNEDGTFTICHKTEVVKNTLNPVWQPFSIPVRALCNGDYDRTVKIDVYDWDRDGSHDFIGEFTTSYRELSKAQNQFTVYEVLNPRKKCKKKKYTNSGTVTLLSFSVDSEFTFVDYIKGGTQLNFTVAIDFTASNGNPLQPTSLHYMSPYQLSAYAMALKAVGEIIQDYDSDKLFPAYGFGAKLPPEGRISHQFPLNNNDEDPNCAGIEGVLESYFQSLRTVQLYGPTYFAPVINQVARAAAKISDGSQYYVLLIITDGVISDMTQTKEAIVSASSLPMSIIIVGVGPAMFEAMEELDGDDVRVSSRGRYAERDIVQFVPFRDYVDRSGNQVLSMARLAKDVLAEIPEQLLSYMRTRDIQPRPPPPVSPNPTPAPEQP</sequence>
<proteinExistence type="evidence at protein level"/>
<comment type="function">
    <text evidence="1 2">Probable calcium-dependent phospholipid-binding protein that may play a role in calcium-mediated intracellular processes. Plays a role in dendrite formation by melanocytes.</text>
</comment>
<comment type="cofactor">
    <cofactor evidence="3">
        <name>Ca(2+)</name>
        <dbReference type="ChEBI" id="CHEBI:29108"/>
    </cofactor>
</comment>
<comment type="similarity">
    <text evidence="6">Belongs to the copine family.</text>
</comment>
<accession>Q1RLL3</accession>
<accession>Q8C990</accession>
<gene>
    <name evidence="7" type="primary">Cpne9</name>
</gene>
<organism>
    <name type="scientific">Mus musculus</name>
    <name type="common">Mouse</name>
    <dbReference type="NCBI Taxonomy" id="10090"/>
    <lineage>
        <taxon>Eukaryota</taxon>
        <taxon>Metazoa</taxon>
        <taxon>Chordata</taxon>
        <taxon>Craniata</taxon>
        <taxon>Vertebrata</taxon>
        <taxon>Euteleostomi</taxon>
        <taxon>Mammalia</taxon>
        <taxon>Eutheria</taxon>
        <taxon>Euarchontoglires</taxon>
        <taxon>Glires</taxon>
        <taxon>Rodentia</taxon>
        <taxon>Myomorpha</taxon>
        <taxon>Muroidea</taxon>
        <taxon>Muridae</taxon>
        <taxon>Murinae</taxon>
        <taxon>Mus</taxon>
        <taxon>Mus</taxon>
    </lineage>
</organism>
<evidence type="ECO:0000250" key="1">
    <source>
        <dbReference type="UniProtKB" id="Q8IYJ1"/>
    </source>
</evidence>
<evidence type="ECO:0000250" key="2">
    <source>
        <dbReference type="UniProtKB" id="Q99829"/>
    </source>
</evidence>
<evidence type="ECO:0000255" key="3">
    <source>
        <dbReference type="PROSITE-ProRule" id="PRU00041"/>
    </source>
</evidence>
<evidence type="ECO:0000255" key="4">
    <source>
        <dbReference type="PROSITE-ProRule" id="PRU00219"/>
    </source>
</evidence>
<evidence type="ECO:0000256" key="5">
    <source>
        <dbReference type="SAM" id="MobiDB-lite"/>
    </source>
</evidence>
<evidence type="ECO:0000305" key="6"/>
<evidence type="ECO:0000312" key="7">
    <source>
        <dbReference type="MGI" id="MGI:2443052"/>
    </source>
</evidence>